<protein>
    <recommendedName>
        <fullName>Interferon beta</fullName>
        <shortName>IFN-beta</shortName>
    </recommendedName>
</protein>
<sequence length="187" mass="22496">MTSRSLLPFVLSLLLPRIIMAQSYLELYSHQWLNNWKSLHLLNELDGQFPLHCLKESMNFKLPAEMLHPHQFQQENATEAIHDLLQQIFNIFSRNHSQTGWDEAIVEKFLHGVHQEMVWLELFLEEEMGWENSTLRRDISLHIKSYFKRMMDYLKGRNYSSCAWEVIRMETKRSCLVIYRLTRKLKK</sequence>
<evidence type="ECO:0000250" key="1">
    <source>
        <dbReference type="UniProtKB" id="P01574"/>
    </source>
</evidence>
<evidence type="ECO:0000250" key="2">
    <source>
        <dbReference type="UniProtKB" id="P01575"/>
    </source>
</evidence>
<evidence type="ECO:0000250" key="3">
    <source>
        <dbReference type="UniProtKB" id="P70499"/>
    </source>
</evidence>
<evidence type="ECO:0000255" key="4"/>
<evidence type="ECO:0000305" key="5"/>
<name>IFNB_TACAC</name>
<gene>
    <name type="primary">IFNB1</name>
    <name type="synonym">IFNB</name>
</gene>
<organism>
    <name type="scientific">Tachyglossus aculeatus aculeatus</name>
    <name type="common">Southeast Australian short-beaked echidna</name>
    <dbReference type="NCBI Taxonomy" id="49271"/>
    <lineage>
        <taxon>Eukaryota</taxon>
        <taxon>Metazoa</taxon>
        <taxon>Chordata</taxon>
        <taxon>Craniata</taxon>
        <taxon>Vertebrata</taxon>
        <taxon>Euteleostomi</taxon>
        <taxon>Mammalia</taxon>
        <taxon>Monotremata</taxon>
        <taxon>Tachyglossidae</taxon>
        <taxon>Tachyglossus</taxon>
    </lineage>
</organism>
<comment type="function">
    <text evidence="1 2">Type I interferon cytokine that plays a key role in the innate immune response to infection, developing tumors and other inflammatory stimuli. Signals via binding to high-affinity (IFNAR2) and low-affinity (IFNAR1) heterodimeric receptor, activating the canonical Jak-STAT signaling pathway resulting in transcriptional activation or repression of interferon-regulated genes that encode the effectors of the interferon response, such as antiviral proteins, regulators of cell proliferation and differentiation, and immunoregulatory proteins (By similarity). Signals mostly via binding to a IFNAR1-IFNAR2 heterodimeric receptor, but can also function with IFNAR1 alone and independently of Jak-STAT pathways. Elicits a wide variety of responses, including antiviral and antibacterial activities, and can regulate the development of B-cells, myelopoiesis and lipopolysaccharide (LPS)-inducible production of tumor necrosis factor. Plays a role in neuronal homeostasis by regulating dopamine turnover and protecting dopaminergic neurons: acts by promoting neuronal autophagy and alpha-synuclein clearance, thereby preventing dopaminergic neuron loss. IFNB1 is more potent than interferon-alpha (IFN-alpha) in inducing the apoptotic and antiproliferative pathways required for control of tumor cell growth (By similarity).</text>
</comment>
<comment type="subunit">
    <text evidence="1">Monomer.</text>
</comment>
<comment type="subcellular location">
    <subcellularLocation>
        <location evidence="1">Secreted</location>
    </subcellularLocation>
</comment>
<comment type="similarity">
    <text evidence="5">Belongs to the alpha/beta interferon family.</text>
</comment>
<dbReference type="EMBL" id="AY194920">
    <property type="protein sequence ID" value="AAP34279.1"/>
    <property type="molecule type" value="Genomic_DNA"/>
</dbReference>
<dbReference type="SMR" id="Q6XZW6"/>
<dbReference type="GlyCosmos" id="Q6XZW6">
    <property type="glycosylation" value="4 sites, No reported glycans"/>
</dbReference>
<dbReference type="GO" id="GO:0005615">
    <property type="term" value="C:extracellular space"/>
    <property type="evidence" value="ECO:0007669"/>
    <property type="project" value="UniProtKB-KW"/>
</dbReference>
<dbReference type="GO" id="GO:0005125">
    <property type="term" value="F:cytokine activity"/>
    <property type="evidence" value="ECO:0007669"/>
    <property type="project" value="UniProtKB-KW"/>
</dbReference>
<dbReference type="GO" id="GO:0005126">
    <property type="term" value="F:cytokine receptor binding"/>
    <property type="evidence" value="ECO:0007669"/>
    <property type="project" value="InterPro"/>
</dbReference>
<dbReference type="GO" id="GO:0051607">
    <property type="term" value="P:defense response to virus"/>
    <property type="evidence" value="ECO:0000250"/>
    <property type="project" value="UniProtKB"/>
</dbReference>
<dbReference type="GO" id="GO:0006955">
    <property type="term" value="P:immune response"/>
    <property type="evidence" value="ECO:0007669"/>
    <property type="project" value="UniProtKB-ARBA"/>
</dbReference>
<dbReference type="GO" id="GO:0140123">
    <property type="term" value="P:negative regulation of Lewy body formation"/>
    <property type="evidence" value="ECO:0000250"/>
    <property type="project" value="UniProtKB"/>
</dbReference>
<dbReference type="GO" id="GO:0070050">
    <property type="term" value="P:neuron cellular homeostasis"/>
    <property type="evidence" value="ECO:0000250"/>
    <property type="project" value="UniProtKB"/>
</dbReference>
<dbReference type="GO" id="GO:0010508">
    <property type="term" value="P:positive regulation of autophagy"/>
    <property type="evidence" value="ECO:0000250"/>
    <property type="project" value="UniProtKB"/>
</dbReference>
<dbReference type="FunFam" id="1.20.1250.10:FF:000026">
    <property type="entry name" value="Interferon beta"/>
    <property type="match status" value="1"/>
</dbReference>
<dbReference type="Gene3D" id="1.20.1250.10">
    <property type="match status" value="1"/>
</dbReference>
<dbReference type="InterPro" id="IPR009079">
    <property type="entry name" value="4_helix_cytokine-like_core"/>
</dbReference>
<dbReference type="InterPro" id="IPR000471">
    <property type="entry name" value="Interferon_alpha/beta/delta"/>
</dbReference>
<dbReference type="PANTHER" id="PTHR11691:SF73">
    <property type="entry name" value="INTERFERON BETA"/>
    <property type="match status" value="1"/>
</dbReference>
<dbReference type="PANTHER" id="PTHR11691">
    <property type="entry name" value="TYPE I INTERFERON"/>
    <property type="match status" value="1"/>
</dbReference>
<dbReference type="Pfam" id="PF00143">
    <property type="entry name" value="Interferon"/>
    <property type="match status" value="1"/>
</dbReference>
<dbReference type="PRINTS" id="PR00266">
    <property type="entry name" value="INTERFERONAB"/>
</dbReference>
<dbReference type="SMART" id="SM00076">
    <property type="entry name" value="IFabd"/>
    <property type="match status" value="1"/>
</dbReference>
<dbReference type="SUPFAM" id="SSF47266">
    <property type="entry name" value="4-helical cytokines"/>
    <property type="match status" value="1"/>
</dbReference>
<dbReference type="PROSITE" id="PS00252">
    <property type="entry name" value="INTERFERON_A_B_D"/>
    <property type="match status" value="1"/>
</dbReference>
<proteinExistence type="inferred from homology"/>
<reference key="1">
    <citation type="journal article" date="2004" name="Immunol. Cell Biol.">
        <title>Type I interferon genes from the egg-laying mammal, Tachyglossus aculeatus (short-beaked echidna).</title>
        <authorList>
            <person name="Harrison G.A."/>
            <person name="McNicol K.A."/>
            <person name="Deane E.M."/>
        </authorList>
    </citation>
    <scope>NUCLEOTIDE SEQUENCE [GENOMIC DNA]</scope>
</reference>
<accession>Q6XZW6</accession>
<feature type="signal peptide" evidence="4">
    <location>
        <begin position="1"/>
        <end position="21"/>
    </location>
</feature>
<feature type="chain" id="PRO_0000041829" description="Interferon beta">
    <location>
        <begin position="22"/>
        <end position="187"/>
    </location>
</feature>
<feature type="modified residue" description="Phosphotyrosine" evidence="3">
    <location>
        <position position="24"/>
    </location>
</feature>
<feature type="glycosylation site" description="N-linked (GlcNAc...) asparagine" evidence="4">
    <location>
        <position position="76"/>
    </location>
</feature>
<feature type="glycosylation site" description="N-linked (GlcNAc...) asparagine" evidence="4">
    <location>
        <position position="95"/>
    </location>
</feature>
<feature type="glycosylation site" description="N-linked (GlcNAc...) asparagine" evidence="4">
    <location>
        <position position="132"/>
    </location>
</feature>
<feature type="glycosylation site" description="N-linked (GlcNAc...) asparagine" evidence="4">
    <location>
        <position position="158"/>
    </location>
</feature>
<feature type="disulfide bond" evidence="1">
    <location>
        <begin position="53"/>
        <end position="162"/>
    </location>
</feature>
<keyword id="KW-0051">Antiviral defense</keyword>
<keyword id="KW-0202">Cytokine</keyword>
<keyword id="KW-1015">Disulfide bond</keyword>
<keyword id="KW-0325">Glycoprotein</keyword>
<keyword id="KW-0597">Phosphoprotein</keyword>
<keyword id="KW-0964">Secreted</keyword>
<keyword id="KW-0732">Signal</keyword>